<gene>
    <name evidence="1" type="primary">rpmI</name>
    <name type="ordered locus">BruAb1_2094</name>
</gene>
<comment type="similarity">
    <text evidence="1">Belongs to the bacterial ribosomal protein bL35 family.</text>
</comment>
<organism>
    <name type="scientific">Brucella abortus biovar 1 (strain 9-941)</name>
    <dbReference type="NCBI Taxonomy" id="262698"/>
    <lineage>
        <taxon>Bacteria</taxon>
        <taxon>Pseudomonadati</taxon>
        <taxon>Pseudomonadota</taxon>
        <taxon>Alphaproteobacteria</taxon>
        <taxon>Hyphomicrobiales</taxon>
        <taxon>Brucellaceae</taxon>
        <taxon>Brucella/Ochrobactrum group</taxon>
        <taxon>Brucella</taxon>
    </lineage>
</organism>
<dbReference type="EMBL" id="AE017223">
    <property type="protein sequence ID" value="AAX75391.1"/>
    <property type="molecule type" value="Genomic_DNA"/>
</dbReference>
<dbReference type="RefSeq" id="WP_002965184.1">
    <property type="nucleotide sequence ID" value="NC_006932.1"/>
</dbReference>
<dbReference type="SMR" id="Q57AE3"/>
<dbReference type="EnsemblBacteria" id="AAX75391">
    <property type="protein sequence ID" value="AAX75391"/>
    <property type="gene ID" value="BruAb1_2094"/>
</dbReference>
<dbReference type="GeneID" id="93017574"/>
<dbReference type="KEGG" id="bmb:BruAb1_2094"/>
<dbReference type="HOGENOM" id="CLU_169643_2_1_5"/>
<dbReference type="Proteomes" id="UP000000540">
    <property type="component" value="Chromosome I"/>
</dbReference>
<dbReference type="GO" id="GO:0022625">
    <property type="term" value="C:cytosolic large ribosomal subunit"/>
    <property type="evidence" value="ECO:0007669"/>
    <property type="project" value="TreeGrafter"/>
</dbReference>
<dbReference type="GO" id="GO:0003735">
    <property type="term" value="F:structural constituent of ribosome"/>
    <property type="evidence" value="ECO:0007669"/>
    <property type="project" value="InterPro"/>
</dbReference>
<dbReference type="GO" id="GO:0006412">
    <property type="term" value="P:translation"/>
    <property type="evidence" value="ECO:0007669"/>
    <property type="project" value="UniProtKB-UniRule"/>
</dbReference>
<dbReference type="FunFam" id="4.10.410.60:FF:000001">
    <property type="entry name" value="50S ribosomal protein L35"/>
    <property type="match status" value="1"/>
</dbReference>
<dbReference type="Gene3D" id="4.10.410.60">
    <property type="match status" value="1"/>
</dbReference>
<dbReference type="HAMAP" id="MF_00514">
    <property type="entry name" value="Ribosomal_bL35"/>
    <property type="match status" value="1"/>
</dbReference>
<dbReference type="InterPro" id="IPR001706">
    <property type="entry name" value="Ribosomal_bL35"/>
</dbReference>
<dbReference type="InterPro" id="IPR021137">
    <property type="entry name" value="Ribosomal_bL35-like"/>
</dbReference>
<dbReference type="InterPro" id="IPR018265">
    <property type="entry name" value="Ribosomal_bL35_CS"/>
</dbReference>
<dbReference type="InterPro" id="IPR037229">
    <property type="entry name" value="Ribosomal_bL35_sf"/>
</dbReference>
<dbReference type="NCBIfam" id="TIGR00001">
    <property type="entry name" value="rpmI_bact"/>
    <property type="match status" value="1"/>
</dbReference>
<dbReference type="PANTHER" id="PTHR33343">
    <property type="entry name" value="54S RIBOSOMAL PROTEIN BL35M"/>
    <property type="match status" value="1"/>
</dbReference>
<dbReference type="PANTHER" id="PTHR33343:SF1">
    <property type="entry name" value="LARGE RIBOSOMAL SUBUNIT PROTEIN BL35M"/>
    <property type="match status" value="1"/>
</dbReference>
<dbReference type="Pfam" id="PF01632">
    <property type="entry name" value="Ribosomal_L35p"/>
    <property type="match status" value="1"/>
</dbReference>
<dbReference type="PRINTS" id="PR00064">
    <property type="entry name" value="RIBOSOMALL35"/>
</dbReference>
<dbReference type="SUPFAM" id="SSF143034">
    <property type="entry name" value="L35p-like"/>
    <property type="match status" value="1"/>
</dbReference>
<dbReference type="PROSITE" id="PS00936">
    <property type="entry name" value="RIBOSOMAL_L35"/>
    <property type="match status" value="1"/>
</dbReference>
<proteinExistence type="inferred from homology"/>
<sequence>MPKMKTKSAAKKRFKITGTGKVKAAAAGKRHGMIKRSNKFIRDARGTMVLADADAKIVKQFLPNGL</sequence>
<evidence type="ECO:0000255" key="1">
    <source>
        <dbReference type="HAMAP-Rule" id="MF_00514"/>
    </source>
</evidence>
<evidence type="ECO:0000305" key="2"/>
<feature type="chain" id="PRO_0000258644" description="Large ribosomal subunit protein bL35">
    <location>
        <begin position="1"/>
        <end position="66"/>
    </location>
</feature>
<protein>
    <recommendedName>
        <fullName evidence="1">Large ribosomal subunit protein bL35</fullName>
    </recommendedName>
    <alternativeName>
        <fullName evidence="2">50S ribosomal protein L35</fullName>
    </alternativeName>
</protein>
<accession>Q57AE3</accession>
<reference key="1">
    <citation type="journal article" date="2005" name="J. Bacteriol.">
        <title>Completion of the genome sequence of Brucella abortus and comparison to the highly similar genomes of Brucella melitensis and Brucella suis.</title>
        <authorList>
            <person name="Halling S.M."/>
            <person name="Peterson-Burch B.D."/>
            <person name="Bricker B.J."/>
            <person name="Zuerner R.L."/>
            <person name="Qing Z."/>
            <person name="Li L.-L."/>
            <person name="Kapur V."/>
            <person name="Alt D.P."/>
            <person name="Olsen S.C."/>
        </authorList>
    </citation>
    <scope>NUCLEOTIDE SEQUENCE [LARGE SCALE GENOMIC DNA]</scope>
    <source>
        <strain>9-941</strain>
    </source>
</reference>
<name>RL35_BRUAB</name>
<keyword id="KW-0687">Ribonucleoprotein</keyword>
<keyword id="KW-0689">Ribosomal protein</keyword>